<comment type="subcellular location">
    <subcellularLocation>
        <location evidence="1">Membrane</location>
        <topology evidence="1">Single-pass membrane protein</topology>
    </subcellularLocation>
</comment>
<comment type="similarity">
    <text evidence="2">Belongs to the SscA family.</text>
</comment>
<sequence length="29" mass="3023">MSGYGTSFALIVVLFILLIIVGTAFVGGY</sequence>
<evidence type="ECO:0000255" key="1"/>
<evidence type="ECO:0000305" key="2"/>
<protein>
    <recommendedName>
        <fullName evidence="2">Uncharacterized membrane protein YczM</fullName>
    </recommendedName>
</protein>
<proteinExistence type="inferred from homology"/>
<accession>C0H3V0</accession>
<dbReference type="EMBL" id="AL009126">
    <property type="protein sequence ID" value="CAX52547.1"/>
    <property type="molecule type" value="Genomic_DNA"/>
</dbReference>
<dbReference type="RefSeq" id="WP_015482794.1">
    <property type="nucleotide sequence ID" value="NZ_OZ025638.1"/>
</dbReference>
<dbReference type="RefSeq" id="YP_003097676.1">
    <property type="nucleotide sequence ID" value="NC_000964.3"/>
</dbReference>
<dbReference type="STRING" id="224308.BSU03788"/>
<dbReference type="PaxDb" id="224308-BSU03788"/>
<dbReference type="EnsemblBacteria" id="CAX52547">
    <property type="protein sequence ID" value="CAX52547"/>
    <property type="gene ID" value="BSU_03788"/>
</dbReference>
<dbReference type="GeneID" id="8303108"/>
<dbReference type="PATRIC" id="fig|224308.179.peg.399"/>
<dbReference type="InParanoid" id="C0H3V0"/>
<dbReference type="BioCyc" id="BSUB:BSU03788-MONOMER"/>
<dbReference type="Proteomes" id="UP000001570">
    <property type="component" value="Chromosome"/>
</dbReference>
<dbReference type="GO" id="GO:0016020">
    <property type="term" value="C:membrane"/>
    <property type="evidence" value="ECO:0007669"/>
    <property type="project" value="UniProtKB-SubCell"/>
</dbReference>
<dbReference type="InterPro" id="IPR010070">
    <property type="entry name" value="YjcZ-like"/>
</dbReference>
<dbReference type="NCBIfam" id="TIGR01732">
    <property type="entry name" value="tiny_TM_bacill"/>
    <property type="match status" value="1"/>
</dbReference>
<dbReference type="Pfam" id="PF09680">
    <property type="entry name" value="YjcZ_2"/>
    <property type="match status" value="1"/>
</dbReference>
<feature type="chain" id="PRO_0000384379" description="Uncharacterized membrane protein YczM">
    <location>
        <begin position="1"/>
        <end position="29"/>
    </location>
</feature>
<feature type="transmembrane region" description="Helical" evidence="1">
    <location>
        <begin position="8"/>
        <end position="28"/>
    </location>
</feature>
<gene>
    <name type="primary">yczM</name>
    <name type="ordered locus">BSU03788</name>
</gene>
<reference key="1">
    <citation type="journal article" date="1997" name="Nature">
        <title>The complete genome sequence of the Gram-positive bacterium Bacillus subtilis.</title>
        <authorList>
            <person name="Kunst F."/>
            <person name="Ogasawara N."/>
            <person name="Moszer I."/>
            <person name="Albertini A.M."/>
            <person name="Alloni G."/>
            <person name="Azevedo V."/>
            <person name="Bertero M.G."/>
            <person name="Bessieres P."/>
            <person name="Bolotin A."/>
            <person name="Borchert S."/>
            <person name="Borriss R."/>
            <person name="Boursier L."/>
            <person name="Brans A."/>
            <person name="Braun M."/>
            <person name="Brignell S.C."/>
            <person name="Bron S."/>
            <person name="Brouillet S."/>
            <person name="Bruschi C.V."/>
            <person name="Caldwell B."/>
            <person name="Capuano V."/>
            <person name="Carter N.M."/>
            <person name="Choi S.-K."/>
            <person name="Codani J.-J."/>
            <person name="Connerton I.F."/>
            <person name="Cummings N.J."/>
            <person name="Daniel R.A."/>
            <person name="Denizot F."/>
            <person name="Devine K.M."/>
            <person name="Duesterhoeft A."/>
            <person name="Ehrlich S.D."/>
            <person name="Emmerson P.T."/>
            <person name="Entian K.-D."/>
            <person name="Errington J."/>
            <person name="Fabret C."/>
            <person name="Ferrari E."/>
            <person name="Foulger D."/>
            <person name="Fritz C."/>
            <person name="Fujita M."/>
            <person name="Fujita Y."/>
            <person name="Fuma S."/>
            <person name="Galizzi A."/>
            <person name="Galleron N."/>
            <person name="Ghim S.-Y."/>
            <person name="Glaser P."/>
            <person name="Goffeau A."/>
            <person name="Golightly E.J."/>
            <person name="Grandi G."/>
            <person name="Guiseppi G."/>
            <person name="Guy B.J."/>
            <person name="Haga K."/>
            <person name="Haiech J."/>
            <person name="Harwood C.R."/>
            <person name="Henaut A."/>
            <person name="Hilbert H."/>
            <person name="Holsappel S."/>
            <person name="Hosono S."/>
            <person name="Hullo M.-F."/>
            <person name="Itaya M."/>
            <person name="Jones L.-M."/>
            <person name="Joris B."/>
            <person name="Karamata D."/>
            <person name="Kasahara Y."/>
            <person name="Klaerr-Blanchard M."/>
            <person name="Klein C."/>
            <person name="Kobayashi Y."/>
            <person name="Koetter P."/>
            <person name="Koningstein G."/>
            <person name="Krogh S."/>
            <person name="Kumano M."/>
            <person name="Kurita K."/>
            <person name="Lapidus A."/>
            <person name="Lardinois S."/>
            <person name="Lauber J."/>
            <person name="Lazarevic V."/>
            <person name="Lee S.-M."/>
            <person name="Levine A."/>
            <person name="Liu H."/>
            <person name="Masuda S."/>
            <person name="Mauel C."/>
            <person name="Medigue C."/>
            <person name="Medina N."/>
            <person name="Mellado R.P."/>
            <person name="Mizuno M."/>
            <person name="Moestl D."/>
            <person name="Nakai S."/>
            <person name="Noback M."/>
            <person name="Noone D."/>
            <person name="O'Reilly M."/>
            <person name="Ogawa K."/>
            <person name="Ogiwara A."/>
            <person name="Oudega B."/>
            <person name="Park S.-H."/>
            <person name="Parro V."/>
            <person name="Pohl T.M."/>
            <person name="Portetelle D."/>
            <person name="Porwollik S."/>
            <person name="Prescott A.M."/>
            <person name="Presecan E."/>
            <person name="Pujic P."/>
            <person name="Purnelle B."/>
            <person name="Rapoport G."/>
            <person name="Rey M."/>
            <person name="Reynolds S."/>
            <person name="Rieger M."/>
            <person name="Rivolta C."/>
            <person name="Rocha E."/>
            <person name="Roche B."/>
            <person name="Rose M."/>
            <person name="Sadaie Y."/>
            <person name="Sato T."/>
            <person name="Scanlan E."/>
            <person name="Schleich S."/>
            <person name="Schroeter R."/>
            <person name="Scoffone F."/>
            <person name="Sekiguchi J."/>
            <person name="Sekowska A."/>
            <person name="Seror S.J."/>
            <person name="Serror P."/>
            <person name="Shin B.-S."/>
            <person name="Soldo B."/>
            <person name="Sorokin A."/>
            <person name="Tacconi E."/>
            <person name="Takagi T."/>
            <person name="Takahashi H."/>
            <person name="Takemaru K."/>
            <person name="Takeuchi M."/>
            <person name="Tamakoshi A."/>
            <person name="Tanaka T."/>
            <person name="Terpstra P."/>
            <person name="Tognoni A."/>
            <person name="Tosato V."/>
            <person name="Uchiyama S."/>
            <person name="Vandenbol M."/>
            <person name="Vannier F."/>
            <person name="Vassarotti A."/>
            <person name="Viari A."/>
            <person name="Wambutt R."/>
            <person name="Wedler E."/>
            <person name="Wedler H."/>
            <person name="Weitzenegger T."/>
            <person name="Winters P."/>
            <person name="Wipat A."/>
            <person name="Yamamoto H."/>
            <person name="Yamane K."/>
            <person name="Yasumoto K."/>
            <person name="Yata K."/>
            <person name="Yoshida K."/>
            <person name="Yoshikawa H.-F."/>
            <person name="Zumstein E."/>
            <person name="Yoshikawa H."/>
            <person name="Danchin A."/>
        </authorList>
    </citation>
    <scope>NUCLEOTIDE SEQUENCE [LARGE SCALE GENOMIC DNA]</scope>
    <source>
        <strain>168</strain>
    </source>
</reference>
<organism>
    <name type="scientific">Bacillus subtilis (strain 168)</name>
    <dbReference type="NCBI Taxonomy" id="224308"/>
    <lineage>
        <taxon>Bacteria</taxon>
        <taxon>Bacillati</taxon>
        <taxon>Bacillota</taxon>
        <taxon>Bacilli</taxon>
        <taxon>Bacillales</taxon>
        <taxon>Bacillaceae</taxon>
        <taxon>Bacillus</taxon>
    </lineage>
</organism>
<keyword id="KW-0472">Membrane</keyword>
<keyword id="KW-1185">Reference proteome</keyword>
<keyword id="KW-0812">Transmembrane</keyword>
<keyword id="KW-1133">Transmembrane helix</keyword>
<name>YCZM_BACSU</name>